<proteinExistence type="inferred from homology"/>
<comment type="function">
    <text evidence="1">F(1)F(0) ATP synthase produces ATP from ADP in the presence of a proton or sodium gradient. F-type ATPases consist of two structural domains, F(1) containing the extramembraneous catalytic core and F(0) containing the membrane proton channel, linked together by a central stalk and a peripheral stalk. During catalysis, ATP synthesis in the catalytic domain of F(1) is coupled via a rotary mechanism of the central stalk subunits to proton translocation.</text>
</comment>
<comment type="function">
    <text evidence="1">Key component of the F(0) channel; it plays a direct role in translocation across the membrane. A homomeric c-ring of between 10-14 subunits forms the central stalk rotor element with the F(1) delta and epsilon subunits.</text>
</comment>
<comment type="subunit">
    <text evidence="1">F-type ATPases have 2 components, F(1) - the catalytic core - and F(0) - the membrane proton channel. F(1) has five subunits: alpha(3), beta(3), gamma(1), delta(1), epsilon(1). F(0) has three main subunits: a(1), b(2) and c(10-14). The alpha and beta chains form an alternating ring which encloses part of the gamma chain. F(1) is attached to F(0) by a central stalk formed by the gamma and epsilon chains, while a peripheral stalk is formed by the delta and b chains.</text>
</comment>
<comment type="subcellular location">
    <subcellularLocation>
        <location evidence="1">Cell inner membrane</location>
        <topology evidence="1">Multi-pass membrane protein</topology>
    </subcellularLocation>
</comment>
<comment type="similarity">
    <text evidence="1">Belongs to the ATPase C chain family.</text>
</comment>
<sequence length="82" mass="8065">MLLSILLQVATGTGLAKLGEALGAGLAVIGAGLGIGKIGESAMEGIARQPEAAGDIRMNMIIAAALVEGVSLFAVVVCGFLL</sequence>
<dbReference type="EMBL" id="AP010656">
    <property type="protein sequence ID" value="BAG83631.1"/>
    <property type="molecule type" value="Genomic_DNA"/>
</dbReference>
<dbReference type="RefSeq" id="WP_012573392.1">
    <property type="nucleotide sequence ID" value="NC_011565.1"/>
</dbReference>
<dbReference type="SMR" id="B6YR09"/>
<dbReference type="STRING" id="511995.CFPG_368"/>
<dbReference type="KEGG" id="aps:CFPG_368"/>
<dbReference type="eggNOG" id="COG0636">
    <property type="taxonomic scope" value="Bacteria"/>
</dbReference>
<dbReference type="HOGENOM" id="CLU_148047_5_1_10"/>
<dbReference type="OrthoDB" id="5383454at2"/>
<dbReference type="Proteomes" id="UP000000723">
    <property type="component" value="Chromosome"/>
</dbReference>
<dbReference type="GO" id="GO:0005886">
    <property type="term" value="C:plasma membrane"/>
    <property type="evidence" value="ECO:0007669"/>
    <property type="project" value="UniProtKB-SubCell"/>
</dbReference>
<dbReference type="GO" id="GO:0045259">
    <property type="term" value="C:proton-transporting ATP synthase complex"/>
    <property type="evidence" value="ECO:0007669"/>
    <property type="project" value="UniProtKB-KW"/>
</dbReference>
<dbReference type="GO" id="GO:0033177">
    <property type="term" value="C:proton-transporting two-sector ATPase complex, proton-transporting domain"/>
    <property type="evidence" value="ECO:0007669"/>
    <property type="project" value="InterPro"/>
</dbReference>
<dbReference type="GO" id="GO:0008289">
    <property type="term" value="F:lipid binding"/>
    <property type="evidence" value="ECO:0007669"/>
    <property type="project" value="UniProtKB-KW"/>
</dbReference>
<dbReference type="GO" id="GO:0046933">
    <property type="term" value="F:proton-transporting ATP synthase activity, rotational mechanism"/>
    <property type="evidence" value="ECO:0007669"/>
    <property type="project" value="UniProtKB-UniRule"/>
</dbReference>
<dbReference type="CDD" id="cd18121">
    <property type="entry name" value="ATP-synt_Fo_c"/>
    <property type="match status" value="1"/>
</dbReference>
<dbReference type="FunFam" id="1.20.20.10:FF:000004">
    <property type="entry name" value="ATP synthase subunit c"/>
    <property type="match status" value="1"/>
</dbReference>
<dbReference type="Gene3D" id="1.20.20.10">
    <property type="entry name" value="F1F0 ATP synthase subunit C"/>
    <property type="match status" value="1"/>
</dbReference>
<dbReference type="HAMAP" id="MF_01396">
    <property type="entry name" value="ATP_synth_c_bact"/>
    <property type="match status" value="1"/>
</dbReference>
<dbReference type="InterPro" id="IPR005953">
    <property type="entry name" value="ATP_synth_csu_bac/chlpt"/>
</dbReference>
<dbReference type="InterPro" id="IPR000454">
    <property type="entry name" value="ATP_synth_F0_csu"/>
</dbReference>
<dbReference type="InterPro" id="IPR020537">
    <property type="entry name" value="ATP_synth_F0_csu_DDCD_BS"/>
</dbReference>
<dbReference type="InterPro" id="IPR038662">
    <property type="entry name" value="ATP_synth_F0_csu_sf"/>
</dbReference>
<dbReference type="InterPro" id="IPR002379">
    <property type="entry name" value="ATPase_proteolipid_c-like_dom"/>
</dbReference>
<dbReference type="InterPro" id="IPR035921">
    <property type="entry name" value="F/V-ATP_Csub_sf"/>
</dbReference>
<dbReference type="NCBIfam" id="TIGR01260">
    <property type="entry name" value="ATP_synt_c"/>
    <property type="match status" value="1"/>
</dbReference>
<dbReference type="Pfam" id="PF00137">
    <property type="entry name" value="ATP-synt_C"/>
    <property type="match status" value="1"/>
</dbReference>
<dbReference type="PRINTS" id="PR00124">
    <property type="entry name" value="ATPASEC"/>
</dbReference>
<dbReference type="SUPFAM" id="SSF81333">
    <property type="entry name" value="F1F0 ATP synthase subunit C"/>
    <property type="match status" value="1"/>
</dbReference>
<dbReference type="PROSITE" id="PS00605">
    <property type="entry name" value="ATPASE_C"/>
    <property type="match status" value="1"/>
</dbReference>
<protein>
    <recommendedName>
        <fullName evidence="1">ATP synthase subunit c</fullName>
    </recommendedName>
    <alternativeName>
        <fullName evidence="1">ATP synthase F(0) sector subunit c</fullName>
    </alternativeName>
    <alternativeName>
        <fullName evidence="1">F-type ATPase subunit c</fullName>
        <shortName evidence="1">F-ATPase subunit c</shortName>
    </alternativeName>
    <alternativeName>
        <fullName evidence="1">Lipid-binding protein</fullName>
    </alternativeName>
</protein>
<name>ATPL_AZOPC</name>
<feature type="chain" id="PRO_1000184319" description="ATP synthase subunit c">
    <location>
        <begin position="1"/>
        <end position="82"/>
    </location>
</feature>
<feature type="transmembrane region" description="Helical" evidence="1">
    <location>
        <begin position="18"/>
        <end position="38"/>
    </location>
</feature>
<feature type="transmembrane region" description="Helical" evidence="1">
    <location>
        <begin position="61"/>
        <end position="81"/>
    </location>
</feature>
<feature type="site" description="Reversibly protonated during proton transport" evidence="1">
    <location>
        <position position="68"/>
    </location>
</feature>
<accession>B6YR09</accession>
<organism>
    <name type="scientific">Azobacteroides pseudotrichonymphae genomovar. CFP2</name>
    <dbReference type="NCBI Taxonomy" id="511995"/>
    <lineage>
        <taxon>Bacteria</taxon>
        <taxon>Pseudomonadati</taxon>
        <taxon>Bacteroidota</taxon>
        <taxon>Bacteroidia</taxon>
        <taxon>Bacteroidales</taxon>
        <taxon>Candidatus Azobacteroides</taxon>
    </lineage>
</organism>
<evidence type="ECO:0000255" key="1">
    <source>
        <dbReference type="HAMAP-Rule" id="MF_01396"/>
    </source>
</evidence>
<gene>
    <name evidence="1" type="primary">atpE</name>
    <name type="ordered locus">CFPG_368</name>
</gene>
<reference key="1">
    <citation type="journal article" date="2008" name="Science">
        <title>Genome of an endosymbiont coupling N2 fixation to cellulolysis within RT protist cells in termite gut.</title>
        <authorList>
            <person name="Hongoh Y."/>
            <person name="Sharma V.K."/>
            <person name="Prakash T."/>
            <person name="Noda S."/>
            <person name="Toh H."/>
            <person name="Taylor T.D."/>
            <person name="Kudo T."/>
            <person name="Sakaki Y."/>
            <person name="Toyoda A."/>
            <person name="Hattori M."/>
            <person name="Ohkuma M."/>
        </authorList>
    </citation>
    <scope>NUCLEOTIDE SEQUENCE [LARGE SCALE GENOMIC DNA]</scope>
</reference>
<keyword id="KW-0066">ATP synthesis</keyword>
<keyword id="KW-0997">Cell inner membrane</keyword>
<keyword id="KW-1003">Cell membrane</keyword>
<keyword id="KW-0138">CF(0)</keyword>
<keyword id="KW-0375">Hydrogen ion transport</keyword>
<keyword id="KW-0406">Ion transport</keyword>
<keyword id="KW-0446">Lipid-binding</keyword>
<keyword id="KW-0472">Membrane</keyword>
<keyword id="KW-1185">Reference proteome</keyword>
<keyword id="KW-0812">Transmembrane</keyword>
<keyword id="KW-1133">Transmembrane helix</keyword>
<keyword id="KW-0813">Transport</keyword>